<dbReference type="EMBL" id="CP000487">
    <property type="protein sequence ID" value="ABK81904.1"/>
    <property type="molecule type" value="Genomic_DNA"/>
</dbReference>
<dbReference type="RefSeq" id="WP_011732077.1">
    <property type="nucleotide sequence ID" value="NC_008599.1"/>
</dbReference>
<dbReference type="SMR" id="A0RPW7"/>
<dbReference type="GeneID" id="61064916"/>
<dbReference type="KEGG" id="cff:CFF8240_1089"/>
<dbReference type="eggNOG" id="COG0443">
    <property type="taxonomic scope" value="Bacteria"/>
</dbReference>
<dbReference type="HOGENOM" id="CLU_005965_2_4_7"/>
<dbReference type="Proteomes" id="UP000000760">
    <property type="component" value="Chromosome"/>
</dbReference>
<dbReference type="GO" id="GO:0005524">
    <property type="term" value="F:ATP binding"/>
    <property type="evidence" value="ECO:0007669"/>
    <property type="project" value="UniProtKB-UniRule"/>
</dbReference>
<dbReference type="GO" id="GO:0140662">
    <property type="term" value="F:ATP-dependent protein folding chaperone"/>
    <property type="evidence" value="ECO:0007669"/>
    <property type="project" value="InterPro"/>
</dbReference>
<dbReference type="GO" id="GO:0051082">
    <property type="term" value="F:unfolded protein binding"/>
    <property type="evidence" value="ECO:0007669"/>
    <property type="project" value="InterPro"/>
</dbReference>
<dbReference type="CDD" id="cd10234">
    <property type="entry name" value="ASKHA_NBD_HSP70_DnaK-like"/>
    <property type="match status" value="1"/>
</dbReference>
<dbReference type="FunFam" id="2.60.34.10:FF:000014">
    <property type="entry name" value="Chaperone protein DnaK HSP70"/>
    <property type="match status" value="1"/>
</dbReference>
<dbReference type="FunFam" id="1.20.1270.10:FF:000001">
    <property type="entry name" value="Molecular chaperone DnaK"/>
    <property type="match status" value="1"/>
</dbReference>
<dbReference type="FunFam" id="3.30.420.40:FF:000004">
    <property type="entry name" value="Molecular chaperone DnaK"/>
    <property type="match status" value="1"/>
</dbReference>
<dbReference type="FunFam" id="3.90.640.10:FF:000003">
    <property type="entry name" value="Molecular chaperone DnaK"/>
    <property type="match status" value="1"/>
</dbReference>
<dbReference type="Gene3D" id="1.20.1270.10">
    <property type="match status" value="1"/>
</dbReference>
<dbReference type="Gene3D" id="3.30.420.40">
    <property type="match status" value="2"/>
</dbReference>
<dbReference type="Gene3D" id="3.90.640.10">
    <property type="entry name" value="Actin, Chain A, domain 4"/>
    <property type="match status" value="1"/>
</dbReference>
<dbReference type="Gene3D" id="2.60.34.10">
    <property type="entry name" value="Substrate Binding Domain Of DNAk, Chain A, domain 1"/>
    <property type="match status" value="1"/>
</dbReference>
<dbReference type="HAMAP" id="MF_00332">
    <property type="entry name" value="DnaK"/>
    <property type="match status" value="1"/>
</dbReference>
<dbReference type="InterPro" id="IPR043129">
    <property type="entry name" value="ATPase_NBD"/>
</dbReference>
<dbReference type="InterPro" id="IPR012725">
    <property type="entry name" value="Chaperone_DnaK"/>
</dbReference>
<dbReference type="InterPro" id="IPR018181">
    <property type="entry name" value="Heat_shock_70_CS"/>
</dbReference>
<dbReference type="InterPro" id="IPR029048">
    <property type="entry name" value="HSP70_C_sf"/>
</dbReference>
<dbReference type="InterPro" id="IPR029047">
    <property type="entry name" value="HSP70_peptide-bd_sf"/>
</dbReference>
<dbReference type="InterPro" id="IPR013126">
    <property type="entry name" value="Hsp_70_fam"/>
</dbReference>
<dbReference type="NCBIfam" id="NF001413">
    <property type="entry name" value="PRK00290.1"/>
    <property type="match status" value="1"/>
</dbReference>
<dbReference type="NCBIfam" id="TIGR02350">
    <property type="entry name" value="prok_dnaK"/>
    <property type="match status" value="1"/>
</dbReference>
<dbReference type="PANTHER" id="PTHR19375">
    <property type="entry name" value="HEAT SHOCK PROTEIN 70KDA"/>
    <property type="match status" value="1"/>
</dbReference>
<dbReference type="Pfam" id="PF00012">
    <property type="entry name" value="HSP70"/>
    <property type="match status" value="1"/>
</dbReference>
<dbReference type="PRINTS" id="PR00301">
    <property type="entry name" value="HEATSHOCK70"/>
</dbReference>
<dbReference type="SUPFAM" id="SSF53067">
    <property type="entry name" value="Actin-like ATPase domain"/>
    <property type="match status" value="2"/>
</dbReference>
<dbReference type="SUPFAM" id="SSF100934">
    <property type="entry name" value="Heat shock protein 70kD (HSP70), C-terminal subdomain"/>
    <property type="match status" value="1"/>
</dbReference>
<dbReference type="SUPFAM" id="SSF100920">
    <property type="entry name" value="Heat shock protein 70kD (HSP70), peptide-binding domain"/>
    <property type="match status" value="1"/>
</dbReference>
<dbReference type="PROSITE" id="PS00297">
    <property type="entry name" value="HSP70_1"/>
    <property type="match status" value="1"/>
</dbReference>
<dbReference type="PROSITE" id="PS00329">
    <property type="entry name" value="HSP70_2"/>
    <property type="match status" value="1"/>
</dbReference>
<dbReference type="PROSITE" id="PS01036">
    <property type="entry name" value="HSP70_3"/>
    <property type="match status" value="1"/>
</dbReference>
<reference key="1">
    <citation type="submission" date="2006-11" db="EMBL/GenBank/DDBJ databases">
        <title>Sequence of Campylobacter fetus subsp. fetus 82-40.</title>
        <authorList>
            <person name="Fouts D.E."/>
            <person name="Nelson K.E."/>
        </authorList>
    </citation>
    <scope>NUCLEOTIDE SEQUENCE [LARGE SCALE GENOMIC DNA]</scope>
    <source>
        <strain>82-40</strain>
    </source>
</reference>
<sequence length="626" mass="67117">MSKVIGIDLGTTNSCVSIYERGESKVIPNKEGKNTTPSVVAFTDKGEILVGDTAKRQAVTNPEKTIFSIKRIMGLMMNEKNAKEAKNRLPYHIVDRNGACAVEIAGKTYTPQEISAKVLMKLKEDAEAFLGESVVDAVITVPAYFNDSQRKATKEAGTIAGLNVLRIINEPTAAALAYGLDKKEAEKIVVYDLGGGTFDVTVLETGDSVVEVLATGGNAFLGGDDFDNRLIDFLVSEFKSETGIDLKNDVMALQRLKEAAENAKKELSSAMETTINLPFITADATGPKHLTKTLSRAKFEGMIDDLVGETITKINEVVKDAGISKGDIKEVVMVGGSTRVPLVQEEVKKAFSKELNKSVNPDEVVAIGAAIQGAVIKGDVKDVLLLDVTPLSLGIETLGGVMSKLIEKGTTIPTKKSQTFSTAEDNQSAVTINVLQGEREFAKDNKSLGNFNLEGIMPAPRGVPQIEVTFDIDANGILTVSAKDKASGKAQNITISGSSGLSEEEINKMVNDAEAHKEDDKKRKEAVEARNAADSLAHQTEKSLSEMGEKIPAEDRAKIEAALNDLKEVLKDESASKEQIDVKVKALSEVSHKLAEAMYKDQNAGAADGGAEKKKKDDDVIDAEVE</sequence>
<comment type="function">
    <text evidence="1">Acts as a chaperone.</text>
</comment>
<comment type="induction">
    <text evidence="1">By stress conditions e.g. heat shock.</text>
</comment>
<comment type="similarity">
    <text evidence="1">Belongs to the heat shock protein 70 family.</text>
</comment>
<proteinExistence type="inferred from homology"/>
<name>DNAK_CAMFF</name>
<evidence type="ECO:0000255" key="1">
    <source>
        <dbReference type="HAMAP-Rule" id="MF_00332"/>
    </source>
</evidence>
<evidence type="ECO:0000256" key="2">
    <source>
        <dbReference type="SAM" id="MobiDB-lite"/>
    </source>
</evidence>
<protein>
    <recommendedName>
        <fullName evidence="1">Chaperone protein DnaK</fullName>
    </recommendedName>
    <alternativeName>
        <fullName evidence="1">HSP70</fullName>
    </alternativeName>
    <alternativeName>
        <fullName evidence="1">Heat shock 70 kDa protein</fullName>
    </alternativeName>
    <alternativeName>
        <fullName evidence="1">Heat shock protein 70</fullName>
    </alternativeName>
</protein>
<organism>
    <name type="scientific">Campylobacter fetus subsp. fetus (strain 82-40)</name>
    <dbReference type="NCBI Taxonomy" id="360106"/>
    <lineage>
        <taxon>Bacteria</taxon>
        <taxon>Pseudomonadati</taxon>
        <taxon>Campylobacterota</taxon>
        <taxon>Epsilonproteobacteria</taxon>
        <taxon>Campylobacterales</taxon>
        <taxon>Campylobacteraceae</taxon>
        <taxon>Campylobacter</taxon>
    </lineage>
</organism>
<gene>
    <name evidence="1" type="primary">dnaK</name>
    <name type="ordered locus">CFF8240_1089</name>
</gene>
<keyword id="KW-0067">ATP-binding</keyword>
<keyword id="KW-0143">Chaperone</keyword>
<keyword id="KW-0547">Nucleotide-binding</keyword>
<keyword id="KW-0597">Phosphoprotein</keyword>
<keyword id="KW-0346">Stress response</keyword>
<accession>A0RPW7</accession>
<feature type="chain" id="PRO_1000059530" description="Chaperone protein DnaK">
    <location>
        <begin position="1"/>
        <end position="626"/>
    </location>
</feature>
<feature type="region of interest" description="Disordered" evidence="2">
    <location>
        <begin position="512"/>
        <end position="551"/>
    </location>
</feature>
<feature type="region of interest" description="Disordered" evidence="2">
    <location>
        <begin position="601"/>
        <end position="626"/>
    </location>
</feature>
<feature type="compositionally biased region" description="Basic and acidic residues" evidence="2">
    <location>
        <begin position="512"/>
        <end position="528"/>
    </location>
</feature>
<feature type="compositionally biased region" description="Basic and acidic residues" evidence="2">
    <location>
        <begin position="539"/>
        <end position="551"/>
    </location>
</feature>
<feature type="modified residue" description="Phosphothreonine; by autocatalysis" evidence="1">
    <location>
        <position position="197"/>
    </location>
</feature>